<dbReference type="EMBL" id="CP000826">
    <property type="protein sequence ID" value="ABV41776.1"/>
    <property type="molecule type" value="Genomic_DNA"/>
</dbReference>
<dbReference type="STRING" id="399741.Spro_2675"/>
<dbReference type="KEGG" id="spe:Spro_2675"/>
<dbReference type="eggNOG" id="ENOG502Z96Y">
    <property type="taxonomic scope" value="Bacteria"/>
</dbReference>
<dbReference type="HOGENOM" id="CLU_073287_0_0_6"/>
<dbReference type="OrthoDB" id="6454524at2"/>
<dbReference type="GO" id="GO:0005886">
    <property type="term" value="C:plasma membrane"/>
    <property type="evidence" value="ECO:0007669"/>
    <property type="project" value="UniProtKB-SubCell"/>
</dbReference>
<dbReference type="HAMAP" id="MF_01067">
    <property type="entry name" value="UPF0259"/>
    <property type="match status" value="1"/>
</dbReference>
<dbReference type="InterPro" id="IPR009627">
    <property type="entry name" value="UPF0259"/>
</dbReference>
<dbReference type="NCBIfam" id="NF002774">
    <property type="entry name" value="PRK02868.1"/>
    <property type="match status" value="1"/>
</dbReference>
<dbReference type="Pfam" id="PF06790">
    <property type="entry name" value="UPF0259"/>
    <property type="match status" value="1"/>
</dbReference>
<comment type="subcellular location">
    <subcellularLocation>
        <location evidence="1">Cell inner membrane</location>
        <topology evidence="1">Multi-pass membrane protein</topology>
    </subcellularLocation>
</comment>
<comment type="similarity">
    <text evidence="1">Belongs to the UPF0259 family.</text>
</comment>
<evidence type="ECO:0000255" key="1">
    <source>
        <dbReference type="HAMAP-Rule" id="MF_01067"/>
    </source>
</evidence>
<name>Y2675_SERP5</name>
<sequence>MPITANTLYRDSFNFFRNQLTSILMLALLTAFISVLLNQAFSPDVEQLKILSATEGDFAASAGMGIQEIIQQMTPEQQMVLLKVSAAATFSALVGNVLLVGGMLTLIRLVSQGQRISALRAIGASAPELPRLLLLLFICTLLIQLGLTLFVVPGVIMAIAFSLAPVITATDKKGVFASIKLSCKLAFANARVIVPAMMLWLAAKLLVLFMVSHLSVLTPNVASVVLTALSNLVSALLLIYLFRLYMLLRS</sequence>
<proteinExistence type="inferred from homology"/>
<feature type="chain" id="PRO_1000064531" description="UPF0259 membrane protein Spro_2675">
    <location>
        <begin position="1"/>
        <end position="250"/>
    </location>
</feature>
<feature type="transmembrane region" description="Helical" evidence="1">
    <location>
        <begin position="23"/>
        <end position="43"/>
    </location>
</feature>
<feature type="transmembrane region" description="Helical" evidence="1">
    <location>
        <begin position="87"/>
        <end position="107"/>
    </location>
</feature>
<feature type="transmembrane region" description="Helical" evidence="1">
    <location>
        <begin position="132"/>
        <end position="152"/>
    </location>
</feature>
<feature type="transmembrane region" description="Helical" evidence="1">
    <location>
        <begin position="156"/>
        <end position="176"/>
    </location>
</feature>
<feature type="transmembrane region" description="Helical" evidence="1">
    <location>
        <begin position="192"/>
        <end position="212"/>
    </location>
</feature>
<feature type="transmembrane region" description="Helical" evidence="1">
    <location>
        <begin position="222"/>
        <end position="242"/>
    </location>
</feature>
<organism>
    <name type="scientific">Serratia proteamaculans (strain 568)</name>
    <dbReference type="NCBI Taxonomy" id="399741"/>
    <lineage>
        <taxon>Bacteria</taxon>
        <taxon>Pseudomonadati</taxon>
        <taxon>Pseudomonadota</taxon>
        <taxon>Gammaproteobacteria</taxon>
        <taxon>Enterobacterales</taxon>
        <taxon>Yersiniaceae</taxon>
        <taxon>Serratia</taxon>
    </lineage>
</organism>
<accession>A8GF86</accession>
<protein>
    <recommendedName>
        <fullName evidence="1">UPF0259 membrane protein Spro_2675</fullName>
    </recommendedName>
</protein>
<reference key="1">
    <citation type="submission" date="2007-09" db="EMBL/GenBank/DDBJ databases">
        <title>Complete sequence of chromosome of Serratia proteamaculans 568.</title>
        <authorList>
            <consortium name="US DOE Joint Genome Institute"/>
            <person name="Copeland A."/>
            <person name="Lucas S."/>
            <person name="Lapidus A."/>
            <person name="Barry K."/>
            <person name="Glavina del Rio T."/>
            <person name="Dalin E."/>
            <person name="Tice H."/>
            <person name="Pitluck S."/>
            <person name="Chain P."/>
            <person name="Malfatti S."/>
            <person name="Shin M."/>
            <person name="Vergez L."/>
            <person name="Schmutz J."/>
            <person name="Larimer F."/>
            <person name="Land M."/>
            <person name="Hauser L."/>
            <person name="Kyrpides N."/>
            <person name="Kim E."/>
            <person name="Taghavi S."/>
            <person name="Newman L."/>
            <person name="Vangronsveld J."/>
            <person name="van der Lelie D."/>
            <person name="Richardson P."/>
        </authorList>
    </citation>
    <scope>NUCLEOTIDE SEQUENCE [LARGE SCALE GENOMIC DNA]</scope>
    <source>
        <strain>568</strain>
    </source>
</reference>
<keyword id="KW-0997">Cell inner membrane</keyword>
<keyword id="KW-1003">Cell membrane</keyword>
<keyword id="KW-0472">Membrane</keyword>
<keyword id="KW-0812">Transmembrane</keyword>
<keyword id="KW-1133">Transmembrane helix</keyword>
<gene>
    <name type="ordered locus">Spro_2675</name>
</gene>